<evidence type="ECO:0000255" key="1">
    <source>
        <dbReference type="HAMAP-Rule" id="MF_00362"/>
    </source>
</evidence>
<evidence type="ECO:0000305" key="2"/>
<name>RL10_OCEIH</name>
<keyword id="KW-1185">Reference proteome</keyword>
<keyword id="KW-0687">Ribonucleoprotein</keyword>
<keyword id="KW-0689">Ribosomal protein</keyword>
<keyword id="KW-0694">RNA-binding</keyword>
<keyword id="KW-0699">rRNA-binding</keyword>
<gene>
    <name evidence="1" type="primary">rplJ</name>
    <name type="ordered locus">OB0109</name>
</gene>
<organism>
    <name type="scientific">Oceanobacillus iheyensis (strain DSM 14371 / CIP 107618 / JCM 11309 / KCTC 3954 / HTE831)</name>
    <dbReference type="NCBI Taxonomy" id="221109"/>
    <lineage>
        <taxon>Bacteria</taxon>
        <taxon>Bacillati</taxon>
        <taxon>Bacillota</taxon>
        <taxon>Bacilli</taxon>
        <taxon>Bacillales</taxon>
        <taxon>Bacillaceae</taxon>
        <taxon>Oceanobacillus</taxon>
    </lineage>
</organism>
<sequence length="166" mass="18282">MSGIIEKKKQVVEEIAEKFRASQTAVVVDYRGLDVAEVTALRKELREAGIEFKVYKNTMTRRAVEAVELTDLNDTLTGPTAIAFSNDDVVAPARILNNFKKDHEALEIKGGVIEGQVATLDQIKDLADLPNYEGMVSMLLSVLQAPVRNFAYVTKAVAEQKEEQGA</sequence>
<dbReference type="EMBL" id="BA000028">
    <property type="protein sequence ID" value="BAC12065.1"/>
    <property type="molecule type" value="Genomic_DNA"/>
</dbReference>
<dbReference type="RefSeq" id="WP_011064512.1">
    <property type="nucleotide sequence ID" value="NC_004193.1"/>
</dbReference>
<dbReference type="SMR" id="Q8ETZ1"/>
<dbReference type="STRING" id="221109.gene:10732299"/>
<dbReference type="KEGG" id="oih:OB0109"/>
<dbReference type="eggNOG" id="COG0244">
    <property type="taxonomic scope" value="Bacteria"/>
</dbReference>
<dbReference type="HOGENOM" id="CLU_092227_2_0_9"/>
<dbReference type="OrthoDB" id="9808307at2"/>
<dbReference type="PhylomeDB" id="Q8ETZ1"/>
<dbReference type="Proteomes" id="UP000000822">
    <property type="component" value="Chromosome"/>
</dbReference>
<dbReference type="GO" id="GO:0015934">
    <property type="term" value="C:large ribosomal subunit"/>
    <property type="evidence" value="ECO:0007669"/>
    <property type="project" value="InterPro"/>
</dbReference>
<dbReference type="GO" id="GO:0070180">
    <property type="term" value="F:large ribosomal subunit rRNA binding"/>
    <property type="evidence" value="ECO:0007669"/>
    <property type="project" value="UniProtKB-UniRule"/>
</dbReference>
<dbReference type="GO" id="GO:0003735">
    <property type="term" value="F:structural constituent of ribosome"/>
    <property type="evidence" value="ECO:0007669"/>
    <property type="project" value="InterPro"/>
</dbReference>
<dbReference type="GO" id="GO:0006412">
    <property type="term" value="P:translation"/>
    <property type="evidence" value="ECO:0007669"/>
    <property type="project" value="UniProtKB-UniRule"/>
</dbReference>
<dbReference type="CDD" id="cd05797">
    <property type="entry name" value="Ribosomal_L10"/>
    <property type="match status" value="1"/>
</dbReference>
<dbReference type="FunFam" id="3.30.70.1730:FF:000001">
    <property type="entry name" value="50S ribosomal protein L10"/>
    <property type="match status" value="1"/>
</dbReference>
<dbReference type="Gene3D" id="3.30.70.1730">
    <property type="match status" value="1"/>
</dbReference>
<dbReference type="Gene3D" id="6.10.250.290">
    <property type="match status" value="1"/>
</dbReference>
<dbReference type="HAMAP" id="MF_00362">
    <property type="entry name" value="Ribosomal_uL10"/>
    <property type="match status" value="1"/>
</dbReference>
<dbReference type="InterPro" id="IPR001790">
    <property type="entry name" value="Ribosomal_uL10"/>
</dbReference>
<dbReference type="InterPro" id="IPR043141">
    <property type="entry name" value="Ribosomal_uL10-like_sf"/>
</dbReference>
<dbReference type="InterPro" id="IPR022973">
    <property type="entry name" value="Ribosomal_uL10_bac"/>
</dbReference>
<dbReference type="InterPro" id="IPR047865">
    <property type="entry name" value="Ribosomal_uL10_bac_type"/>
</dbReference>
<dbReference type="InterPro" id="IPR002363">
    <property type="entry name" value="Ribosomal_uL10_CS_bac"/>
</dbReference>
<dbReference type="NCBIfam" id="NF000955">
    <property type="entry name" value="PRK00099.1-1"/>
    <property type="match status" value="1"/>
</dbReference>
<dbReference type="PANTHER" id="PTHR11560">
    <property type="entry name" value="39S RIBOSOMAL PROTEIN L10, MITOCHONDRIAL"/>
    <property type="match status" value="1"/>
</dbReference>
<dbReference type="Pfam" id="PF00466">
    <property type="entry name" value="Ribosomal_L10"/>
    <property type="match status" value="1"/>
</dbReference>
<dbReference type="SUPFAM" id="SSF160369">
    <property type="entry name" value="Ribosomal protein L10-like"/>
    <property type="match status" value="1"/>
</dbReference>
<dbReference type="PROSITE" id="PS01109">
    <property type="entry name" value="RIBOSOMAL_L10"/>
    <property type="match status" value="1"/>
</dbReference>
<protein>
    <recommendedName>
        <fullName evidence="1">Large ribosomal subunit protein uL10</fullName>
    </recommendedName>
    <alternativeName>
        <fullName evidence="2">50S ribosomal protein L10</fullName>
    </alternativeName>
</protein>
<comment type="function">
    <text evidence="1">Forms part of the ribosomal stalk, playing a central role in the interaction of the ribosome with GTP-bound translation factors.</text>
</comment>
<comment type="subunit">
    <text evidence="1">Part of the ribosomal stalk of the 50S ribosomal subunit. The N-terminus interacts with L11 and the large rRNA to form the base of the stalk. The C-terminus forms an elongated spine to which L12 dimers bind in a sequential fashion forming a multimeric L10(L12)X complex.</text>
</comment>
<comment type="similarity">
    <text evidence="1">Belongs to the universal ribosomal protein uL10 family.</text>
</comment>
<feature type="chain" id="PRO_0000154679" description="Large ribosomal subunit protein uL10">
    <location>
        <begin position="1"/>
        <end position="166"/>
    </location>
</feature>
<reference key="1">
    <citation type="journal article" date="2002" name="Nucleic Acids Res.">
        <title>Genome sequence of Oceanobacillus iheyensis isolated from the Iheya Ridge and its unexpected adaptive capabilities to extreme environments.</title>
        <authorList>
            <person name="Takami H."/>
            <person name="Takaki Y."/>
            <person name="Uchiyama I."/>
        </authorList>
    </citation>
    <scope>NUCLEOTIDE SEQUENCE [LARGE SCALE GENOMIC DNA]</scope>
    <source>
        <strain>DSM 14371 / CIP 107618 / JCM 11309 / KCTC 3954 / HTE831</strain>
    </source>
</reference>
<accession>Q8ETZ1</accession>
<proteinExistence type="inferred from homology"/>